<dbReference type="EMBL" id="BC102590">
    <property type="protein sequence ID" value="AAI02591.1"/>
    <property type="molecule type" value="mRNA"/>
</dbReference>
<dbReference type="RefSeq" id="NP_001029443.1">
    <property type="nucleotide sequence ID" value="NM_001034271.2"/>
</dbReference>
<dbReference type="PDB" id="1K8K">
    <property type="method" value="X-ray"/>
    <property type="resolution" value="2.00 A"/>
    <property type="chains" value="E=1-178"/>
</dbReference>
<dbReference type="PDB" id="1TYQ">
    <property type="method" value="X-ray"/>
    <property type="resolution" value="2.55 A"/>
    <property type="chains" value="E=1-178"/>
</dbReference>
<dbReference type="PDB" id="1U2V">
    <property type="method" value="X-ray"/>
    <property type="resolution" value="2.55 A"/>
    <property type="chains" value="E=1-178"/>
</dbReference>
<dbReference type="PDB" id="2P9I">
    <property type="method" value="X-ray"/>
    <property type="resolution" value="2.46 A"/>
    <property type="chains" value="E=1-178"/>
</dbReference>
<dbReference type="PDB" id="2P9K">
    <property type="method" value="X-ray"/>
    <property type="resolution" value="2.59 A"/>
    <property type="chains" value="E=1-178"/>
</dbReference>
<dbReference type="PDB" id="2P9L">
    <property type="method" value="X-ray"/>
    <property type="resolution" value="2.65 A"/>
    <property type="chains" value="E=1-178"/>
</dbReference>
<dbReference type="PDB" id="2P9N">
    <property type="method" value="X-ray"/>
    <property type="resolution" value="2.85 A"/>
    <property type="chains" value="E=1-178"/>
</dbReference>
<dbReference type="PDB" id="2P9P">
    <property type="method" value="X-ray"/>
    <property type="resolution" value="2.90 A"/>
    <property type="chains" value="E=1-178"/>
</dbReference>
<dbReference type="PDB" id="2P9S">
    <property type="method" value="X-ray"/>
    <property type="resolution" value="2.68 A"/>
    <property type="chains" value="E=1-178"/>
</dbReference>
<dbReference type="PDB" id="2P9U">
    <property type="method" value="X-ray"/>
    <property type="resolution" value="2.75 A"/>
    <property type="chains" value="E=1-178"/>
</dbReference>
<dbReference type="PDB" id="3DXK">
    <property type="method" value="X-ray"/>
    <property type="resolution" value="2.70 A"/>
    <property type="chains" value="E=1-178"/>
</dbReference>
<dbReference type="PDB" id="3DXM">
    <property type="method" value="X-ray"/>
    <property type="resolution" value="2.85 A"/>
    <property type="chains" value="E=1-178"/>
</dbReference>
<dbReference type="PDB" id="3RSE">
    <property type="method" value="X-ray"/>
    <property type="resolution" value="2.65 A"/>
    <property type="chains" value="E=1-178"/>
</dbReference>
<dbReference type="PDB" id="3UKR">
    <property type="method" value="X-ray"/>
    <property type="resolution" value="2.48 A"/>
    <property type="chains" value="E=1-178"/>
</dbReference>
<dbReference type="PDB" id="3UKU">
    <property type="method" value="X-ray"/>
    <property type="resolution" value="2.75 A"/>
    <property type="chains" value="E=1-178"/>
</dbReference>
<dbReference type="PDB" id="3ULE">
    <property type="method" value="X-ray"/>
    <property type="resolution" value="2.50 A"/>
    <property type="chains" value="E=1-178"/>
</dbReference>
<dbReference type="PDB" id="4JD2">
    <property type="method" value="X-ray"/>
    <property type="resolution" value="3.08 A"/>
    <property type="chains" value="E=1-178"/>
</dbReference>
<dbReference type="PDB" id="4XEI">
    <property type="method" value="X-ray"/>
    <property type="resolution" value="3.87 A"/>
    <property type="chains" value="E=1-178"/>
</dbReference>
<dbReference type="PDB" id="4XF2">
    <property type="method" value="X-ray"/>
    <property type="resolution" value="5.00 A"/>
    <property type="chains" value="E/X=1-178"/>
</dbReference>
<dbReference type="PDB" id="6DEC">
    <property type="method" value="X-ray"/>
    <property type="resolution" value="4.60 A"/>
    <property type="chains" value="E/L=1-178"/>
</dbReference>
<dbReference type="PDB" id="7JPN">
    <property type="method" value="EM"/>
    <property type="resolution" value="3.24 A"/>
    <property type="chains" value="E=1-178"/>
</dbReference>
<dbReference type="PDB" id="7T5Q">
    <property type="method" value="EM"/>
    <property type="resolution" value="3.40 A"/>
    <property type="chains" value="E=1-178"/>
</dbReference>
<dbReference type="PDB" id="7TPT">
    <property type="method" value="EM"/>
    <property type="resolution" value="3.90 A"/>
    <property type="chains" value="E=1-178"/>
</dbReference>
<dbReference type="PDB" id="8TAH">
    <property type="method" value="EM"/>
    <property type="resolution" value="2.89 A"/>
    <property type="chains" value="E=1-178"/>
</dbReference>
<dbReference type="PDB" id="9DLX">
    <property type="method" value="EM"/>
    <property type="resolution" value="2.91 A"/>
    <property type="chains" value="E=2-176"/>
</dbReference>
<dbReference type="PDB" id="9DLZ">
    <property type="method" value="EM"/>
    <property type="resolution" value="3.40 A"/>
    <property type="chains" value="E=2-176"/>
</dbReference>
<dbReference type="PDBsum" id="1K8K"/>
<dbReference type="PDBsum" id="1TYQ"/>
<dbReference type="PDBsum" id="1U2V"/>
<dbReference type="PDBsum" id="2P9I"/>
<dbReference type="PDBsum" id="2P9K"/>
<dbReference type="PDBsum" id="2P9L"/>
<dbReference type="PDBsum" id="2P9N"/>
<dbReference type="PDBsum" id="2P9P"/>
<dbReference type="PDBsum" id="2P9S"/>
<dbReference type="PDBsum" id="2P9U"/>
<dbReference type="PDBsum" id="3DXK"/>
<dbReference type="PDBsum" id="3DXM"/>
<dbReference type="PDBsum" id="3RSE"/>
<dbReference type="PDBsum" id="3UKR"/>
<dbReference type="PDBsum" id="3UKU"/>
<dbReference type="PDBsum" id="3ULE"/>
<dbReference type="PDBsum" id="4JD2"/>
<dbReference type="PDBsum" id="4XEI"/>
<dbReference type="PDBsum" id="4XF2"/>
<dbReference type="PDBsum" id="6DEC"/>
<dbReference type="PDBsum" id="7JPN"/>
<dbReference type="PDBsum" id="7T5Q"/>
<dbReference type="PDBsum" id="7TPT"/>
<dbReference type="PDBsum" id="8TAH"/>
<dbReference type="PDBsum" id="9DLX"/>
<dbReference type="PDBsum" id="9DLZ"/>
<dbReference type="EMDB" id="EMD-22416"/>
<dbReference type="EMDB" id="EMD-25707"/>
<dbReference type="EMDB" id="EMD-41135"/>
<dbReference type="EMDB" id="EMD-46992"/>
<dbReference type="EMDB" id="EMD-46993"/>
<dbReference type="SMR" id="Q3T035"/>
<dbReference type="BioGRID" id="163240">
    <property type="interactions" value="2"/>
</dbReference>
<dbReference type="DIP" id="DIP-29793N"/>
<dbReference type="FunCoup" id="Q3T035">
    <property type="interactions" value="2987"/>
</dbReference>
<dbReference type="IntAct" id="Q3T035">
    <property type="interactions" value="2"/>
</dbReference>
<dbReference type="STRING" id="9913.ENSBTAP00000074262"/>
<dbReference type="PaxDb" id="9913-ENSBTAP00000007028"/>
<dbReference type="PeptideAtlas" id="Q3T035"/>
<dbReference type="Ensembl" id="ENSBTAT00000007028.4">
    <property type="protein sequence ID" value="ENSBTAP00000007028.3"/>
    <property type="gene ID" value="ENSBTAG00000005345.5"/>
</dbReference>
<dbReference type="GeneID" id="506596"/>
<dbReference type="KEGG" id="bta:506596"/>
<dbReference type="CTD" id="10094"/>
<dbReference type="VEuPathDB" id="HostDB:ENSBTAG00000005345"/>
<dbReference type="VGNC" id="VGNC:53890">
    <property type="gene designation" value="ARPC3"/>
</dbReference>
<dbReference type="eggNOG" id="KOG3155">
    <property type="taxonomic scope" value="Eukaryota"/>
</dbReference>
<dbReference type="GeneTree" id="ENSGT00390000018018"/>
<dbReference type="HOGENOM" id="CLU_094365_1_0_1"/>
<dbReference type="InParanoid" id="Q3T035"/>
<dbReference type="OrthoDB" id="200404at2759"/>
<dbReference type="TreeFam" id="TF314598"/>
<dbReference type="Reactome" id="R-BTA-2029482">
    <property type="pathway name" value="Regulation of actin dynamics for phagocytic cup formation"/>
</dbReference>
<dbReference type="Reactome" id="R-BTA-3928662">
    <property type="pathway name" value="EPHB-mediated forward signaling"/>
</dbReference>
<dbReference type="Reactome" id="R-BTA-5663213">
    <property type="pathway name" value="RHO GTPases Activate WASPs and WAVEs"/>
</dbReference>
<dbReference type="Reactome" id="R-BTA-8856828">
    <property type="pathway name" value="Clathrin-mediated endocytosis"/>
</dbReference>
<dbReference type="EvolutionaryTrace" id="Q3T035"/>
<dbReference type="Proteomes" id="UP000009136">
    <property type="component" value="Chromosome 17"/>
</dbReference>
<dbReference type="Bgee" id="ENSBTAG00000005345">
    <property type="expression patterns" value="Expressed in monocyte and 103 other cell types or tissues"/>
</dbReference>
<dbReference type="GO" id="GO:0005885">
    <property type="term" value="C:Arp2/3 protein complex"/>
    <property type="evidence" value="ECO:0000250"/>
    <property type="project" value="UniProtKB"/>
</dbReference>
<dbReference type="GO" id="GO:0042995">
    <property type="term" value="C:cell projection"/>
    <property type="evidence" value="ECO:0007669"/>
    <property type="project" value="UniProtKB-SubCell"/>
</dbReference>
<dbReference type="GO" id="GO:0005737">
    <property type="term" value="C:cytoplasm"/>
    <property type="evidence" value="ECO:0000314"/>
    <property type="project" value="AgBase"/>
</dbReference>
<dbReference type="GO" id="GO:0005829">
    <property type="term" value="C:cytosol"/>
    <property type="evidence" value="ECO:0000304"/>
    <property type="project" value="Reactome"/>
</dbReference>
<dbReference type="GO" id="GO:0005634">
    <property type="term" value="C:nucleus"/>
    <property type="evidence" value="ECO:0000250"/>
    <property type="project" value="UniProtKB"/>
</dbReference>
<dbReference type="GO" id="GO:0035861">
    <property type="term" value="C:site of double-strand break"/>
    <property type="evidence" value="ECO:0000250"/>
    <property type="project" value="UniProtKB"/>
</dbReference>
<dbReference type="GO" id="GO:0003779">
    <property type="term" value="F:actin binding"/>
    <property type="evidence" value="ECO:0007669"/>
    <property type="project" value="UniProtKB-KW"/>
</dbReference>
<dbReference type="GO" id="GO:0034314">
    <property type="term" value="P:Arp2/3 complex-mediated actin nucleation"/>
    <property type="evidence" value="ECO:0000318"/>
    <property type="project" value="GO_Central"/>
</dbReference>
<dbReference type="GO" id="GO:0030833">
    <property type="term" value="P:regulation of actin filament polymerization"/>
    <property type="evidence" value="ECO:0007669"/>
    <property type="project" value="InterPro"/>
</dbReference>
<dbReference type="FunFam" id="1.10.1760.10:FF:000001">
    <property type="entry name" value="Actin-related protein 2/3 complex subunit 3"/>
    <property type="match status" value="1"/>
</dbReference>
<dbReference type="Gene3D" id="1.10.1760.10">
    <property type="entry name" value="Actin-related protein 2/3 complex subunit 3"/>
    <property type="match status" value="1"/>
</dbReference>
<dbReference type="InterPro" id="IPR007204">
    <property type="entry name" value="ARPC3"/>
</dbReference>
<dbReference type="InterPro" id="IPR036753">
    <property type="entry name" value="ARPC3_sf"/>
</dbReference>
<dbReference type="PANTHER" id="PTHR12391">
    <property type="entry name" value="ARP2/3 COMPLEX 21 KD SUBUNIT"/>
    <property type="match status" value="1"/>
</dbReference>
<dbReference type="Pfam" id="PF04062">
    <property type="entry name" value="P21-Arc"/>
    <property type="match status" value="1"/>
</dbReference>
<dbReference type="PIRSF" id="PIRSF016315">
    <property type="entry name" value="ARP2/3_P21-Arc"/>
    <property type="match status" value="1"/>
</dbReference>
<dbReference type="SUPFAM" id="SSF69060">
    <property type="entry name" value="Arp2/3 complex 21 kDa subunit ARPC3"/>
    <property type="match status" value="1"/>
</dbReference>
<sequence>MPAYHSSLMDPDTKLIGNMALLPIRSQFKGPAPRETKDTDIVDEAIYYFKANVFFKNYEIKNEADRTLIYITLYISECLKKLQKCNSKSQGEKEMYTLGITNFPIPGEPGFPLNAIYAKPANKQEDEVMRAYLQQLRQETGLRLCEKVFDPQNDKPSKWWTCFVKRQFMNKSLSGPGQ</sequence>
<proteinExistence type="evidence at protein level"/>
<reference key="1">
    <citation type="submission" date="2005-08" db="EMBL/GenBank/DDBJ databases">
        <authorList>
            <consortium name="NIH - Mammalian Gene Collection (MGC) project"/>
        </authorList>
    </citation>
    <scope>NUCLEOTIDE SEQUENCE [LARGE SCALE MRNA]</scope>
    <source>
        <strain>Crossbred X Angus</strain>
        <tissue>Liver</tissue>
    </source>
</reference>
<reference key="2">
    <citation type="journal article" date="2001" name="Science">
        <title>Crystal structure of Arp2/3 complex.</title>
        <authorList>
            <person name="Robinson R.C."/>
            <person name="Turbedsky K."/>
            <person name="Kaiser D.A."/>
            <person name="Marchand J.-B."/>
            <person name="Higgs H.N."/>
            <person name="Choe S."/>
            <person name="Pollard T.D."/>
        </authorList>
    </citation>
    <scope>X-RAY CRYSTALLOGRAPHY (2.0 ANGSTROMS) OF ARP2/3 COMPLEX</scope>
</reference>
<reference key="3">
    <citation type="journal article" date="2004" name="Proc. Natl. Acad. Sci. U.S.A.">
        <title>Crystal structures of actin-related protein 2/3 complex with bound ATP or ADP.</title>
        <authorList>
            <person name="Nolen B.J."/>
            <person name="Littlefield R.S."/>
            <person name="Pollard T.D."/>
        </authorList>
    </citation>
    <scope>X-RAY CRYSTALLOGRAPHY (2.55 ANGSTROMS) OF ARP2/3 COMPLEX WITH BOUND ATP</scope>
</reference>
<gene>
    <name type="primary">ARPC3</name>
</gene>
<keyword id="KW-0002">3D-structure</keyword>
<keyword id="KW-0007">Acetylation</keyword>
<keyword id="KW-0009">Actin-binding</keyword>
<keyword id="KW-0966">Cell projection</keyword>
<keyword id="KW-0963">Cytoplasm</keyword>
<keyword id="KW-0206">Cytoskeleton</keyword>
<keyword id="KW-1017">Isopeptide bond</keyword>
<keyword id="KW-0539">Nucleus</keyword>
<keyword id="KW-0597">Phosphoprotein</keyword>
<keyword id="KW-1185">Reference proteome</keyword>
<keyword id="KW-0832">Ubl conjugation</keyword>
<evidence type="ECO:0000250" key="1">
    <source>
        <dbReference type="UniProtKB" id="O15145"/>
    </source>
</evidence>
<evidence type="ECO:0000269" key="2">
    <source>
    </source>
</evidence>
<evidence type="ECO:0000269" key="3">
    <source>
    </source>
</evidence>
<evidence type="ECO:0000305" key="4"/>
<evidence type="ECO:0007829" key="5">
    <source>
        <dbReference type="PDB" id="1K8K"/>
    </source>
</evidence>
<evidence type="ECO:0007829" key="6">
    <source>
        <dbReference type="PDB" id="3RSE"/>
    </source>
</evidence>
<evidence type="ECO:0007829" key="7">
    <source>
        <dbReference type="PDB" id="7JPN"/>
    </source>
</evidence>
<comment type="function">
    <text evidence="1">Component of the Arp2/3 complex, a multiprotein complex that mediates actin polymerization upon stimulation by nucleation-promoting factor (NPF). The Arp2/3 complex mediates the formation of branched actin networks in the cytoplasm, providing the force for cell motility. In addition to its role in the cytoplasmic cytoskeleton, the Arp2/3 complex also promotes actin polymerization in the nucleus, thereby regulating gene transcription and repair of damaged DNA. The Arp2/3 complex promotes homologous recombination (HR) repair in response to DNA damage by promoting nuclear actin polymerization, leading to drive motility of double-strand breaks (DSBs).</text>
</comment>
<comment type="subunit">
    <text evidence="2 3">Component of the Arp2/3 complex composed of ACTR2/ARP2, ACTR3/ARP3, ARPC1B/p41-ARC, ARPC2/p34-ARC, ARPC3/p21-ARC, ARPC4/p20-ARC and ARPC5/p16-ARC.</text>
</comment>
<comment type="subcellular location">
    <subcellularLocation>
        <location evidence="1">Cytoplasm</location>
        <location evidence="1">Cytoskeleton</location>
    </subcellularLocation>
    <subcellularLocation>
        <location evidence="1">Cell projection</location>
    </subcellularLocation>
    <subcellularLocation>
        <location evidence="1">Nucleus</location>
    </subcellularLocation>
</comment>
<comment type="similarity">
    <text evidence="4">Belongs to the ARPC3 family.</text>
</comment>
<name>ARPC3_BOVIN</name>
<feature type="chain" id="PRO_0000246171" description="Actin-related protein 2/3 complex subunit 3">
    <location>
        <begin position="1"/>
        <end position="178"/>
    </location>
</feature>
<feature type="modified residue" description="Phosphotyrosine" evidence="1">
    <location>
        <position position="47"/>
    </location>
</feature>
<feature type="modified residue" description="N6-acetyllysine" evidence="1">
    <location>
        <position position="56"/>
    </location>
</feature>
<feature type="modified residue" description="N6-acetyllysine" evidence="1">
    <location>
        <position position="61"/>
    </location>
</feature>
<feature type="cross-link" description="Glycyl lysine isopeptide (Lys-Gly) (interchain with G-Cter in SUMO2)" evidence="1">
    <location>
        <position position="14"/>
    </location>
</feature>
<feature type="strand" evidence="5">
    <location>
        <begin position="14"/>
        <end position="16"/>
    </location>
</feature>
<feature type="strand" evidence="5">
    <location>
        <begin position="19"/>
        <end position="21"/>
    </location>
</feature>
<feature type="strand" evidence="7">
    <location>
        <begin position="30"/>
        <end position="32"/>
    </location>
</feature>
<feature type="strand" evidence="6">
    <location>
        <begin position="36"/>
        <end position="38"/>
    </location>
</feature>
<feature type="helix" evidence="5">
    <location>
        <begin position="41"/>
        <end position="52"/>
    </location>
</feature>
<feature type="helix" evidence="5">
    <location>
        <begin position="63"/>
        <end position="82"/>
    </location>
</feature>
<feature type="helix" evidence="5">
    <location>
        <begin position="88"/>
        <end position="100"/>
    </location>
</feature>
<feature type="turn" evidence="5">
    <location>
        <begin position="112"/>
        <end position="116"/>
    </location>
</feature>
<feature type="helix" evidence="5">
    <location>
        <begin position="123"/>
        <end position="148"/>
    </location>
</feature>
<feature type="strand" evidence="5">
    <location>
        <begin position="151"/>
        <end position="154"/>
    </location>
</feature>
<feature type="helix" evidence="5">
    <location>
        <begin position="158"/>
        <end position="161"/>
    </location>
</feature>
<feature type="turn" evidence="5">
    <location>
        <begin position="162"/>
        <end position="165"/>
    </location>
</feature>
<feature type="helix" evidence="5">
    <location>
        <begin position="168"/>
        <end position="170"/>
    </location>
</feature>
<accession>Q3T035</accession>
<protein>
    <recommendedName>
        <fullName>Actin-related protein 2/3 complex subunit 3</fullName>
    </recommendedName>
    <alternativeName>
        <fullName>Arp2/3 complex 21 kDa subunit</fullName>
        <shortName>p21-ARC</shortName>
    </alternativeName>
</protein>
<organism>
    <name type="scientific">Bos taurus</name>
    <name type="common">Bovine</name>
    <dbReference type="NCBI Taxonomy" id="9913"/>
    <lineage>
        <taxon>Eukaryota</taxon>
        <taxon>Metazoa</taxon>
        <taxon>Chordata</taxon>
        <taxon>Craniata</taxon>
        <taxon>Vertebrata</taxon>
        <taxon>Euteleostomi</taxon>
        <taxon>Mammalia</taxon>
        <taxon>Eutheria</taxon>
        <taxon>Laurasiatheria</taxon>
        <taxon>Artiodactyla</taxon>
        <taxon>Ruminantia</taxon>
        <taxon>Pecora</taxon>
        <taxon>Bovidae</taxon>
        <taxon>Bovinae</taxon>
        <taxon>Bos</taxon>
    </lineage>
</organism>